<accession>B7K4V8</accession>
<organism>
    <name type="scientific">Rippkaea orientalis (strain PCC 8801 / RF-1)</name>
    <name type="common">Cyanothece sp. (strain PCC 8801)</name>
    <dbReference type="NCBI Taxonomy" id="41431"/>
    <lineage>
        <taxon>Bacteria</taxon>
        <taxon>Bacillati</taxon>
        <taxon>Cyanobacteriota</taxon>
        <taxon>Cyanophyceae</taxon>
        <taxon>Oscillatoriophycideae</taxon>
        <taxon>Chroococcales</taxon>
        <taxon>Aphanothecaceae</taxon>
        <taxon>Rippkaea</taxon>
        <taxon>Rippkaea orientalis</taxon>
    </lineage>
</organism>
<dbReference type="EC" id="1.17.7.4" evidence="1"/>
<dbReference type="EMBL" id="CP001287">
    <property type="protein sequence ID" value="ACK66614.1"/>
    <property type="molecule type" value="Genomic_DNA"/>
</dbReference>
<dbReference type="RefSeq" id="WP_012595881.1">
    <property type="nucleotide sequence ID" value="NC_011726.1"/>
</dbReference>
<dbReference type="SMR" id="B7K4V8"/>
<dbReference type="STRING" id="41431.PCC8801_2610"/>
<dbReference type="KEGG" id="cyp:PCC8801_2610"/>
<dbReference type="eggNOG" id="COG0761">
    <property type="taxonomic scope" value="Bacteria"/>
</dbReference>
<dbReference type="HOGENOM" id="CLU_027486_4_0_3"/>
<dbReference type="OrthoDB" id="9804077at2"/>
<dbReference type="UniPathway" id="UPA00056">
    <property type="reaction ID" value="UER00097"/>
</dbReference>
<dbReference type="UniPathway" id="UPA00059">
    <property type="reaction ID" value="UER00105"/>
</dbReference>
<dbReference type="Proteomes" id="UP000008204">
    <property type="component" value="Chromosome"/>
</dbReference>
<dbReference type="GO" id="GO:0051539">
    <property type="term" value="F:4 iron, 4 sulfur cluster binding"/>
    <property type="evidence" value="ECO:0007669"/>
    <property type="project" value="UniProtKB-UniRule"/>
</dbReference>
<dbReference type="GO" id="GO:0051745">
    <property type="term" value="F:4-hydroxy-3-methylbut-2-enyl diphosphate reductase activity"/>
    <property type="evidence" value="ECO:0007669"/>
    <property type="project" value="UniProtKB-UniRule"/>
</dbReference>
<dbReference type="GO" id="GO:0046872">
    <property type="term" value="F:metal ion binding"/>
    <property type="evidence" value="ECO:0007669"/>
    <property type="project" value="UniProtKB-KW"/>
</dbReference>
<dbReference type="GO" id="GO:0050992">
    <property type="term" value="P:dimethylallyl diphosphate biosynthetic process"/>
    <property type="evidence" value="ECO:0007669"/>
    <property type="project" value="UniProtKB-UniRule"/>
</dbReference>
<dbReference type="GO" id="GO:0019288">
    <property type="term" value="P:isopentenyl diphosphate biosynthetic process, methylerythritol 4-phosphate pathway"/>
    <property type="evidence" value="ECO:0007669"/>
    <property type="project" value="UniProtKB-UniRule"/>
</dbReference>
<dbReference type="GO" id="GO:0016114">
    <property type="term" value="P:terpenoid biosynthetic process"/>
    <property type="evidence" value="ECO:0007669"/>
    <property type="project" value="UniProtKB-UniRule"/>
</dbReference>
<dbReference type="CDD" id="cd13944">
    <property type="entry name" value="lytB_ispH"/>
    <property type="match status" value="1"/>
</dbReference>
<dbReference type="Gene3D" id="3.40.50.11270">
    <property type="match status" value="1"/>
</dbReference>
<dbReference type="Gene3D" id="3.40.1010.20">
    <property type="entry name" value="4-hydroxy-3-methylbut-2-enyl diphosphate reductase, catalytic domain"/>
    <property type="match status" value="2"/>
</dbReference>
<dbReference type="HAMAP" id="MF_00191">
    <property type="entry name" value="IspH"/>
    <property type="match status" value="1"/>
</dbReference>
<dbReference type="InterPro" id="IPR003451">
    <property type="entry name" value="LytB/IspH"/>
</dbReference>
<dbReference type="NCBIfam" id="TIGR00216">
    <property type="entry name" value="ispH_lytB"/>
    <property type="match status" value="1"/>
</dbReference>
<dbReference type="NCBIfam" id="NF009911">
    <property type="entry name" value="PRK13371.1"/>
    <property type="match status" value="1"/>
</dbReference>
<dbReference type="PANTHER" id="PTHR31619">
    <property type="entry name" value="4-HYDROXY-3-METHYLBUT-2-ENYL DIPHOSPHATE REDUCTASE, CHLOROPLASTIC"/>
    <property type="match status" value="1"/>
</dbReference>
<dbReference type="PANTHER" id="PTHR31619:SF5">
    <property type="entry name" value="4-HYDROXY-3-METHYLBUT-2-ENYL DIPHOSPHATE REDUCTASE, CHLOROPLASTIC"/>
    <property type="match status" value="1"/>
</dbReference>
<dbReference type="Pfam" id="PF02401">
    <property type="entry name" value="LYTB"/>
    <property type="match status" value="1"/>
</dbReference>
<proteinExistence type="inferred from homology"/>
<comment type="function">
    <text evidence="1">Catalyzes the conversion of 1-hydroxy-2-methyl-2-(E)-butenyl 4-diphosphate (HMBPP) into a mixture of isopentenyl diphosphate (IPP) and dimethylallyl diphosphate (DMAPP). Acts in the terminal step of the DOXP/MEP pathway for isoprenoid precursor biosynthesis.</text>
</comment>
<comment type="catalytic activity">
    <reaction evidence="1">
        <text>isopentenyl diphosphate + 2 oxidized [2Fe-2S]-[ferredoxin] + H2O = (2E)-4-hydroxy-3-methylbut-2-enyl diphosphate + 2 reduced [2Fe-2S]-[ferredoxin] + 2 H(+)</text>
        <dbReference type="Rhea" id="RHEA:24488"/>
        <dbReference type="Rhea" id="RHEA-COMP:10000"/>
        <dbReference type="Rhea" id="RHEA-COMP:10001"/>
        <dbReference type="ChEBI" id="CHEBI:15377"/>
        <dbReference type="ChEBI" id="CHEBI:15378"/>
        <dbReference type="ChEBI" id="CHEBI:33737"/>
        <dbReference type="ChEBI" id="CHEBI:33738"/>
        <dbReference type="ChEBI" id="CHEBI:128753"/>
        <dbReference type="ChEBI" id="CHEBI:128769"/>
        <dbReference type="EC" id="1.17.7.4"/>
    </reaction>
</comment>
<comment type="catalytic activity">
    <reaction evidence="1">
        <text>dimethylallyl diphosphate + 2 oxidized [2Fe-2S]-[ferredoxin] + H2O = (2E)-4-hydroxy-3-methylbut-2-enyl diphosphate + 2 reduced [2Fe-2S]-[ferredoxin] + 2 H(+)</text>
        <dbReference type="Rhea" id="RHEA:24825"/>
        <dbReference type="Rhea" id="RHEA-COMP:10000"/>
        <dbReference type="Rhea" id="RHEA-COMP:10001"/>
        <dbReference type="ChEBI" id="CHEBI:15377"/>
        <dbReference type="ChEBI" id="CHEBI:15378"/>
        <dbReference type="ChEBI" id="CHEBI:33737"/>
        <dbReference type="ChEBI" id="CHEBI:33738"/>
        <dbReference type="ChEBI" id="CHEBI:57623"/>
        <dbReference type="ChEBI" id="CHEBI:128753"/>
        <dbReference type="EC" id="1.17.7.4"/>
    </reaction>
</comment>
<comment type="cofactor">
    <cofactor evidence="1">
        <name>[4Fe-4S] cluster</name>
        <dbReference type="ChEBI" id="CHEBI:49883"/>
    </cofactor>
    <text evidence="1">Binds 1 [4Fe-4S] cluster per subunit.</text>
</comment>
<comment type="pathway">
    <text evidence="1">Isoprenoid biosynthesis; dimethylallyl diphosphate biosynthesis; dimethylallyl diphosphate from (2E)-4-hydroxy-3-methylbutenyl diphosphate: step 1/1.</text>
</comment>
<comment type="pathway">
    <text evidence="1">Isoprenoid biosynthesis; isopentenyl diphosphate biosynthesis via DXP pathway; isopentenyl diphosphate from 1-deoxy-D-xylulose 5-phosphate: step 6/6.</text>
</comment>
<comment type="similarity">
    <text evidence="1">Belongs to the IspH family.</text>
</comment>
<evidence type="ECO:0000255" key="1">
    <source>
        <dbReference type="HAMAP-Rule" id="MF_00191"/>
    </source>
</evidence>
<protein>
    <recommendedName>
        <fullName evidence="1">4-hydroxy-3-methylbut-2-enyl diphosphate reductase</fullName>
        <shortName evidence="1">HMBPP reductase</shortName>
        <ecNumber evidence="1">1.17.7.4</ecNumber>
    </recommendedName>
</protein>
<feature type="chain" id="PRO_1000118603" description="4-hydroxy-3-methylbut-2-enyl diphosphate reductase">
    <location>
        <begin position="1"/>
        <end position="403"/>
    </location>
</feature>
<feature type="active site" description="Proton donor" evidence="1">
    <location>
        <position position="187"/>
    </location>
</feature>
<feature type="binding site" evidence="1">
    <location>
        <position position="66"/>
    </location>
    <ligand>
        <name>[4Fe-4S] cluster</name>
        <dbReference type="ChEBI" id="CHEBI:49883"/>
    </ligand>
</feature>
<feature type="binding site" evidence="1">
    <location>
        <position position="96"/>
    </location>
    <ligand>
        <name>(2E)-4-hydroxy-3-methylbut-2-enyl diphosphate</name>
        <dbReference type="ChEBI" id="CHEBI:128753"/>
    </ligand>
</feature>
<feature type="binding site" evidence="1">
    <location>
        <position position="96"/>
    </location>
    <ligand>
        <name>dimethylallyl diphosphate</name>
        <dbReference type="ChEBI" id="CHEBI:57623"/>
    </ligand>
</feature>
<feature type="binding site" evidence="1">
    <location>
        <position position="96"/>
    </location>
    <ligand>
        <name>isopentenyl diphosphate</name>
        <dbReference type="ChEBI" id="CHEBI:128769"/>
    </ligand>
</feature>
<feature type="binding site" evidence="1">
    <location>
        <position position="157"/>
    </location>
    <ligand>
        <name>[4Fe-4S] cluster</name>
        <dbReference type="ChEBI" id="CHEBI:49883"/>
    </ligand>
</feature>
<feature type="binding site" evidence="1">
    <location>
        <position position="185"/>
    </location>
    <ligand>
        <name>(2E)-4-hydroxy-3-methylbut-2-enyl diphosphate</name>
        <dbReference type="ChEBI" id="CHEBI:128753"/>
    </ligand>
</feature>
<feature type="binding site" evidence="1">
    <location>
        <position position="185"/>
    </location>
    <ligand>
        <name>dimethylallyl diphosphate</name>
        <dbReference type="ChEBI" id="CHEBI:57623"/>
    </ligand>
</feature>
<feature type="binding site" evidence="1">
    <location>
        <position position="185"/>
    </location>
    <ligand>
        <name>isopentenyl diphosphate</name>
        <dbReference type="ChEBI" id="CHEBI:128769"/>
    </ligand>
</feature>
<feature type="binding site" evidence="1">
    <location>
        <position position="250"/>
    </location>
    <ligand>
        <name>(2E)-4-hydroxy-3-methylbut-2-enyl diphosphate</name>
        <dbReference type="ChEBI" id="CHEBI:128753"/>
    </ligand>
</feature>
<feature type="binding site" evidence="1">
    <location>
        <position position="288"/>
    </location>
    <ligand>
        <name>[4Fe-4S] cluster</name>
        <dbReference type="ChEBI" id="CHEBI:49883"/>
    </ligand>
</feature>
<feature type="binding site" evidence="1">
    <location>
        <position position="317"/>
    </location>
    <ligand>
        <name>(2E)-4-hydroxy-3-methylbut-2-enyl diphosphate</name>
        <dbReference type="ChEBI" id="CHEBI:128753"/>
    </ligand>
</feature>
<feature type="binding site" evidence="1">
    <location>
        <position position="317"/>
    </location>
    <ligand>
        <name>dimethylallyl diphosphate</name>
        <dbReference type="ChEBI" id="CHEBI:57623"/>
    </ligand>
</feature>
<feature type="binding site" evidence="1">
    <location>
        <position position="317"/>
    </location>
    <ligand>
        <name>isopentenyl diphosphate</name>
        <dbReference type="ChEBI" id="CHEBI:128769"/>
    </ligand>
</feature>
<feature type="binding site" evidence="1">
    <location>
        <position position="318"/>
    </location>
    <ligand>
        <name>(2E)-4-hydroxy-3-methylbut-2-enyl diphosphate</name>
        <dbReference type="ChEBI" id="CHEBI:128753"/>
    </ligand>
</feature>
<feature type="binding site" evidence="1">
    <location>
        <position position="318"/>
    </location>
    <ligand>
        <name>dimethylallyl diphosphate</name>
        <dbReference type="ChEBI" id="CHEBI:57623"/>
    </ligand>
</feature>
<feature type="binding site" evidence="1">
    <location>
        <position position="318"/>
    </location>
    <ligand>
        <name>isopentenyl diphosphate</name>
        <dbReference type="ChEBI" id="CHEBI:128769"/>
    </ligand>
</feature>
<feature type="binding site" evidence="1">
    <location>
        <position position="319"/>
    </location>
    <ligand>
        <name>(2E)-4-hydroxy-3-methylbut-2-enyl diphosphate</name>
        <dbReference type="ChEBI" id="CHEBI:128753"/>
    </ligand>
</feature>
<feature type="binding site" evidence="1">
    <location>
        <position position="319"/>
    </location>
    <ligand>
        <name>dimethylallyl diphosphate</name>
        <dbReference type="ChEBI" id="CHEBI:57623"/>
    </ligand>
</feature>
<feature type="binding site" evidence="1">
    <location>
        <position position="319"/>
    </location>
    <ligand>
        <name>isopentenyl diphosphate</name>
        <dbReference type="ChEBI" id="CHEBI:128769"/>
    </ligand>
</feature>
<feature type="binding site" evidence="1">
    <location>
        <position position="379"/>
    </location>
    <ligand>
        <name>(2E)-4-hydroxy-3-methylbut-2-enyl diphosphate</name>
        <dbReference type="ChEBI" id="CHEBI:128753"/>
    </ligand>
</feature>
<feature type="binding site" evidence="1">
    <location>
        <position position="379"/>
    </location>
    <ligand>
        <name>dimethylallyl diphosphate</name>
        <dbReference type="ChEBI" id="CHEBI:57623"/>
    </ligand>
</feature>
<feature type="binding site" evidence="1">
    <location>
        <position position="379"/>
    </location>
    <ligand>
        <name>isopentenyl diphosphate</name>
        <dbReference type="ChEBI" id="CHEBI:128769"/>
    </ligand>
</feature>
<gene>
    <name evidence="1" type="primary">ispH</name>
    <name type="ordered locus">PCC8801_2610</name>
</gene>
<name>ISPH_RIPO1</name>
<reference key="1">
    <citation type="journal article" date="2011" name="MBio">
        <title>Novel metabolic attributes of the genus Cyanothece, comprising a group of unicellular nitrogen-fixing Cyanobacteria.</title>
        <authorList>
            <person name="Bandyopadhyay A."/>
            <person name="Elvitigala T."/>
            <person name="Welsh E."/>
            <person name="Stockel J."/>
            <person name="Liberton M."/>
            <person name="Min H."/>
            <person name="Sherman L.A."/>
            <person name="Pakrasi H.B."/>
        </authorList>
    </citation>
    <scope>NUCLEOTIDE SEQUENCE [LARGE SCALE GENOMIC DNA]</scope>
    <source>
        <strain>PCC 8801 / RF-1</strain>
    </source>
</reference>
<sequence>MDTKAFKRSLQQSENYHRKGFGQTEAAMGVMNTEYQSSLIQQIRQNNYQWKQGNVTIHLAQAFGFCWGVERAVAMAYETRQHFPKESIWITNELIHHPSVNQRLEQMEIKFIEVINGQKDFSQIKSGDVVILPAFGASVSEMQLLNDRGCTIVDTTCPWVSKVWNSVEKHKKRHYTSIIHGKYRHEETVATSSFAGTYLVVLNLEQATYVCDYILKGGNKEEFLAKFKNAYSEGFDPDTDLEKVGIANQTTMLKSETEQIGKLFEGTMLKKYGPAVINDHFMSFNTICDATQERQDAMLELVKEKLDLMVVIGGFNSSNTTHLQEIPIYQGITSYHIDNATRIKPNNCIEHKPLGKDLEIKENWLPEGSIVVGITSGASTPDIIVEAVIEKIFSAKELEYQSN</sequence>
<keyword id="KW-0004">4Fe-4S</keyword>
<keyword id="KW-0408">Iron</keyword>
<keyword id="KW-0411">Iron-sulfur</keyword>
<keyword id="KW-0414">Isoprene biosynthesis</keyword>
<keyword id="KW-0479">Metal-binding</keyword>
<keyword id="KW-0560">Oxidoreductase</keyword>
<keyword id="KW-1185">Reference proteome</keyword>